<sequence length="869" mass="96620">MEPETALWGPDLQGPEQSPNDAHRGAESENEEESPRQESSGEEIIMGDPAQSPESKDSTEMSLERSSQDPSVPQNPPTPLGHSNPLDHQIPLDPPAPEVVPTPSDWTKACEASWQWGALTTWNSPPVVPANEPSLRELVQGRPAGAEKPYICNECGKSFSQWSKLLRHQRIHTGERPNTCSECGKSFTQSSHLVQHQRTHTGEKPYKCPDCGKCFSWSSNLVQHQRTHTGEKPYKCTECEKAFTQSTNLIKHQRSHTGEKPYKCGECRRAFYRSSDLIQHQATHTGEKPYKCPECGKRFGQNHNLLKHQKIHAGEKPYRCTECGKSFIQSSELTQHQRTHTGEKPYECLECGKSFGHSSTLIKHQRTHLREDPFKCPVCGKTFTLSATLLRHQRTHTGERPYKCPECGKSFSVSSNLINHQRIHRGERPYICADCGKSFIMSSTLIRHQRIHTGEKPYKCSDCGKSFIRSSHLIQHRRTHTGEKPYKCPECGKSFSQSSNLITHVRTHMDENLFVCSDCGKAFLEAHELEQHRVIHERGKTPARRAQGDSLLGLGDPSLLTPPPGAKPHKCLVCGKGFNDEGIFMQHQRIHIGENPYKNADGLIAHAAPKPPQLRSPRLPFRGNSYPGAAEGRAEAPGQPLKPPEGQEGFSQRRGLLSSKTYICSHCGESFLDRSVLLQHQLTHGNEKPFLFPDYRIGLGEGAGPSPFLSGKPFKCPECKQSFGLSSELLLHQKVHAGGKSSQKSPELGKSSSVLLEHLRSPLGARPYRCSDCRASFLDRVALTRHQETHTQEKPPNPEDPPPEAVTLSTDQEGEGETPTPTESSSHGEGQNPKTLVEEKPYLCPECGAGFTEVAALLLHRSCHPGVSL</sequence>
<feature type="chain" id="PRO_0000280426" description="Zinc finger protein 629">
    <location>
        <begin position="1"/>
        <end position="869"/>
    </location>
</feature>
<feature type="zinc finger region" description="C2H2-type 1" evidence="1">
    <location>
        <begin position="150"/>
        <end position="172"/>
    </location>
</feature>
<feature type="zinc finger region" description="C2H2-type 2" evidence="1">
    <location>
        <begin position="178"/>
        <end position="200"/>
    </location>
</feature>
<feature type="zinc finger region" description="C2H2-type 3" evidence="1">
    <location>
        <begin position="206"/>
        <end position="228"/>
    </location>
</feature>
<feature type="zinc finger region" description="C2H2-type 4" evidence="1">
    <location>
        <begin position="234"/>
        <end position="256"/>
    </location>
</feature>
<feature type="zinc finger region" description="C2H2-type 5" evidence="1">
    <location>
        <begin position="262"/>
        <end position="284"/>
    </location>
</feature>
<feature type="zinc finger region" description="C2H2-type 6" evidence="1">
    <location>
        <begin position="290"/>
        <end position="312"/>
    </location>
</feature>
<feature type="zinc finger region" description="C2H2-type 7" evidence="1">
    <location>
        <begin position="318"/>
        <end position="340"/>
    </location>
</feature>
<feature type="zinc finger region" description="C2H2-type 8" evidence="1">
    <location>
        <begin position="346"/>
        <end position="368"/>
    </location>
</feature>
<feature type="zinc finger region" description="C2H2-type 9" evidence="1">
    <location>
        <begin position="374"/>
        <end position="396"/>
    </location>
</feature>
<feature type="zinc finger region" description="C2H2-type 10" evidence="1">
    <location>
        <begin position="402"/>
        <end position="424"/>
    </location>
</feature>
<feature type="zinc finger region" description="C2H2-type 11" evidence="1">
    <location>
        <begin position="430"/>
        <end position="452"/>
    </location>
</feature>
<feature type="zinc finger region" description="C2H2-type 12" evidence="1">
    <location>
        <begin position="458"/>
        <end position="480"/>
    </location>
</feature>
<feature type="zinc finger region" description="C2H2-type 13" evidence="1">
    <location>
        <begin position="486"/>
        <end position="508"/>
    </location>
</feature>
<feature type="zinc finger region" description="C2H2-type 14" evidence="1">
    <location>
        <begin position="514"/>
        <end position="536"/>
    </location>
</feature>
<feature type="zinc finger region" description="C2H2-type 15" evidence="1">
    <location>
        <begin position="569"/>
        <end position="591"/>
    </location>
</feature>
<feature type="zinc finger region" description="C2H2-type 16" evidence="1">
    <location>
        <begin position="662"/>
        <end position="684"/>
    </location>
</feature>
<feature type="zinc finger region" description="C2H2-type 17" evidence="1">
    <location>
        <begin position="714"/>
        <end position="736"/>
    </location>
</feature>
<feature type="zinc finger region" description="C2H2-type 18" evidence="1">
    <location>
        <begin position="768"/>
        <end position="790"/>
    </location>
</feature>
<feature type="zinc finger region" description="C2H2-type 19" evidence="1">
    <location>
        <begin position="842"/>
        <end position="864"/>
    </location>
</feature>
<feature type="region of interest" description="Disordered" evidence="2">
    <location>
        <begin position="1"/>
        <end position="105"/>
    </location>
</feature>
<feature type="region of interest" description="Disordered" evidence="2">
    <location>
        <begin position="607"/>
        <end position="651"/>
    </location>
</feature>
<feature type="region of interest" description="Disordered" evidence="2">
    <location>
        <begin position="787"/>
        <end position="837"/>
    </location>
</feature>
<feature type="compositionally biased region" description="Basic and acidic residues" evidence="2">
    <location>
        <begin position="54"/>
        <end position="67"/>
    </location>
</feature>
<feature type="compositionally biased region" description="Low complexity" evidence="2">
    <location>
        <begin position="627"/>
        <end position="638"/>
    </location>
</feature>
<feature type="compositionally biased region" description="Basic and acidic residues" evidence="2">
    <location>
        <begin position="787"/>
        <end position="797"/>
    </location>
</feature>
<feature type="compositionally biased region" description="Low complexity" evidence="2">
    <location>
        <begin position="817"/>
        <end position="829"/>
    </location>
</feature>
<feature type="modified residue" description="Phosphoserine" evidence="5 6">
    <location>
        <position position="18"/>
    </location>
</feature>
<feature type="modified residue" description="Phosphoserine" evidence="4 5">
    <location>
        <position position="616"/>
    </location>
</feature>
<feature type="cross-link" description="Glycyl lysine isopeptide (Lys-Gly) (interchain with G-Cter in SUMO2)" evidence="8">
    <location>
        <position position="251"/>
    </location>
</feature>
<feature type="cross-link" description="Glycyl lysine isopeptide (Lys-Gly) (interchain with G-Cter in SUMO2)" evidence="7 8">
    <location>
        <position position="688"/>
    </location>
</feature>
<feature type="cross-link" description="Glycyl lysine isopeptide (Lys-Gly) (interchain with G-Cter in SUMO2)" evidence="8">
    <location>
        <position position="750"/>
    </location>
</feature>
<feature type="cross-link" description="Glycyl lysine isopeptide (Lys-Gly) (interchain with G-Cter in SUMO2)" evidence="7 8">
    <location>
        <position position="840"/>
    </location>
</feature>
<feature type="sequence variant" id="VAR_052883" description="In dbSNP:rs8050758.">
    <original>P</original>
    <variation>A</variation>
    <location>
        <position position="707"/>
    </location>
</feature>
<organism>
    <name type="scientific">Homo sapiens</name>
    <name type="common">Human</name>
    <dbReference type="NCBI Taxonomy" id="9606"/>
    <lineage>
        <taxon>Eukaryota</taxon>
        <taxon>Metazoa</taxon>
        <taxon>Chordata</taxon>
        <taxon>Craniata</taxon>
        <taxon>Vertebrata</taxon>
        <taxon>Euteleostomi</taxon>
        <taxon>Mammalia</taxon>
        <taxon>Eutheria</taxon>
        <taxon>Euarchontoglires</taxon>
        <taxon>Primates</taxon>
        <taxon>Haplorrhini</taxon>
        <taxon>Catarrhini</taxon>
        <taxon>Hominidae</taxon>
        <taxon>Homo</taxon>
    </lineage>
</organism>
<proteinExistence type="evidence at protein level"/>
<accession>Q9UEG4</accession>
<accession>Q15938</accession>
<reference key="1">
    <citation type="journal article" date="1997" name="DNA Res.">
        <title>Prediction of the coding sequences of unidentified human genes. VII. The complete sequences of 100 new cDNA clones from brain which can code for large proteins in vitro.</title>
        <authorList>
            <person name="Nagase T."/>
            <person name="Ishikawa K."/>
            <person name="Nakajima D."/>
            <person name="Ohira M."/>
            <person name="Seki N."/>
            <person name="Miyajima N."/>
            <person name="Tanaka A."/>
            <person name="Kotani H."/>
            <person name="Nomura N."/>
            <person name="Ohara O."/>
        </authorList>
    </citation>
    <scope>NUCLEOTIDE SEQUENCE [LARGE SCALE MRNA]</scope>
    <source>
        <tissue>Brain</tissue>
    </source>
</reference>
<reference key="2">
    <citation type="journal article" date="1991" name="Proc. Natl. Acad. Sci. U.S.A.">
        <title>Characterization and mapping of human genes encoding zinc finger proteins.</title>
        <authorList>
            <person name="Bray P.L."/>
            <person name="Lichter P."/>
            <person name="Thiesen H.-J."/>
            <person name="Ward D.C."/>
            <person name="Dawid I.B."/>
        </authorList>
    </citation>
    <scope>NUCLEOTIDE SEQUENCE [GENOMIC DNA] OF 147-255</scope>
    <source>
        <tissue>Placenta</tissue>
    </source>
</reference>
<reference key="3">
    <citation type="journal article" date="1992" name="Genomics">
        <title>Clustering of C2-H2 zinc finger motif sequences within telomeric and fragile site regions of human chromosomes.</title>
        <authorList>
            <person name="Lichter P."/>
            <person name="Bray P."/>
            <person name="Ried T."/>
            <person name="Dawid I.B."/>
            <person name="Ward D.C."/>
        </authorList>
    </citation>
    <scope>IDENTIFICATION</scope>
</reference>
<reference key="4">
    <citation type="journal article" date="2010" name="Sci. Signal.">
        <title>Quantitative phosphoproteomics reveals widespread full phosphorylation site occupancy during mitosis.</title>
        <authorList>
            <person name="Olsen J.V."/>
            <person name="Vermeulen M."/>
            <person name="Santamaria A."/>
            <person name="Kumar C."/>
            <person name="Miller M.L."/>
            <person name="Jensen L.J."/>
            <person name="Gnad F."/>
            <person name="Cox J."/>
            <person name="Jensen T.S."/>
            <person name="Nigg E.A."/>
            <person name="Brunak S."/>
            <person name="Mann M."/>
        </authorList>
    </citation>
    <scope>PHOSPHORYLATION [LARGE SCALE ANALYSIS] AT SER-616</scope>
    <scope>IDENTIFICATION BY MASS SPECTROMETRY [LARGE SCALE ANALYSIS]</scope>
    <source>
        <tissue>Cervix carcinoma</tissue>
    </source>
</reference>
<reference key="5">
    <citation type="journal article" date="2013" name="J. Proteome Res.">
        <title>Toward a comprehensive characterization of a human cancer cell phosphoproteome.</title>
        <authorList>
            <person name="Zhou H."/>
            <person name="Di Palma S."/>
            <person name="Preisinger C."/>
            <person name="Peng M."/>
            <person name="Polat A.N."/>
            <person name="Heck A.J."/>
            <person name="Mohammed S."/>
        </authorList>
    </citation>
    <scope>PHOSPHORYLATION [LARGE SCALE ANALYSIS] AT SER-18 AND SER-616</scope>
    <scope>IDENTIFICATION BY MASS SPECTROMETRY [LARGE SCALE ANALYSIS]</scope>
    <source>
        <tissue>Cervix carcinoma</tissue>
        <tissue>Erythroleukemia</tissue>
    </source>
</reference>
<reference key="6">
    <citation type="journal article" date="2014" name="J. Proteomics">
        <title>An enzyme assisted RP-RPLC approach for in-depth analysis of human liver phosphoproteome.</title>
        <authorList>
            <person name="Bian Y."/>
            <person name="Song C."/>
            <person name="Cheng K."/>
            <person name="Dong M."/>
            <person name="Wang F."/>
            <person name="Huang J."/>
            <person name="Sun D."/>
            <person name="Wang L."/>
            <person name="Ye M."/>
            <person name="Zou H."/>
        </authorList>
    </citation>
    <scope>PHOSPHORYLATION [LARGE SCALE ANALYSIS] AT SER-18</scope>
    <scope>IDENTIFICATION BY MASS SPECTROMETRY [LARGE SCALE ANALYSIS]</scope>
    <source>
        <tissue>Liver</tissue>
    </source>
</reference>
<reference key="7">
    <citation type="journal article" date="2015" name="Mol. Cell. Proteomics">
        <title>System-wide analysis of SUMOylation dynamics in response to replication stress reveals novel small ubiquitin-like modified target proteins and acceptor lysines relevant for genome stability.</title>
        <authorList>
            <person name="Xiao Z."/>
            <person name="Chang J.G."/>
            <person name="Hendriks I.A."/>
            <person name="Sigurdsson J.O."/>
            <person name="Olsen J.V."/>
            <person name="Vertegaal A.C."/>
        </authorList>
    </citation>
    <scope>SUMOYLATION [LARGE SCALE ANALYSIS] AT LYS-688 AND LYS-840</scope>
    <scope>IDENTIFICATION BY MASS SPECTROMETRY [LARGE SCALE ANALYSIS]</scope>
</reference>
<reference key="8">
    <citation type="journal article" date="2017" name="Nat. Struct. Mol. Biol.">
        <title>Site-specific mapping of the human SUMO proteome reveals co-modification with phosphorylation.</title>
        <authorList>
            <person name="Hendriks I.A."/>
            <person name="Lyon D."/>
            <person name="Young C."/>
            <person name="Jensen L.J."/>
            <person name="Vertegaal A.C."/>
            <person name="Nielsen M.L."/>
        </authorList>
    </citation>
    <scope>SUMOYLATION [LARGE SCALE ANALYSIS] AT LYS-251; LYS-688; LYS-750 AND LYS-840</scope>
    <scope>IDENTIFICATION BY MASS SPECTROMETRY [LARGE SCALE ANALYSIS]</scope>
</reference>
<name>ZN629_HUMAN</name>
<comment type="function">
    <text>May be involved in transcriptional regulation.</text>
</comment>
<comment type="interaction">
    <interactant intactId="EBI-9977294">
        <id>Q9UEG4</id>
    </interactant>
    <interactant intactId="EBI-10175300">
        <id>Q8TD31-3</id>
        <label>CCHCR1</label>
    </interactant>
    <organismsDiffer>false</organismsDiffer>
    <experiments>3</experiments>
</comment>
<comment type="interaction">
    <interactant intactId="EBI-9977294">
        <id>Q9UEG4</id>
    </interactant>
    <interactant intactId="EBI-11063830">
        <id>Q86X02</id>
        <label>CDR2L</label>
    </interactant>
    <organismsDiffer>false</organismsDiffer>
    <experiments>3</experiments>
</comment>
<comment type="interaction">
    <interactant intactId="EBI-9977294">
        <id>Q9UEG4</id>
    </interactant>
    <interactant intactId="EBI-1052570">
        <id>O95995</id>
        <label>GAS8</label>
    </interactant>
    <organismsDiffer>false</organismsDiffer>
    <experiments>3</experiments>
</comment>
<comment type="interaction">
    <interactant intactId="EBI-9977294">
        <id>Q9UEG4</id>
    </interactant>
    <interactant intactId="EBI-5916454">
        <id>A6NEM1</id>
        <label>GOLGA6L9</label>
    </interactant>
    <organismsDiffer>false</organismsDiffer>
    <experiments>3</experiments>
</comment>
<comment type="interaction">
    <interactant intactId="EBI-9977294">
        <id>Q9UEG4</id>
    </interactant>
    <interactant intactId="EBI-18543805">
        <id>Q14541-2</id>
        <label>HNF4G</label>
    </interactant>
    <organismsDiffer>false</organismsDiffer>
    <experiments>3</experiments>
</comment>
<comment type="interaction">
    <interactant intactId="EBI-9977294">
        <id>Q9UEG4</id>
    </interactant>
    <interactant intactId="EBI-18398632">
        <id>Q9ULR0-1</id>
        <label>ISY1</label>
    </interactant>
    <organismsDiffer>false</organismsDiffer>
    <experiments>3</experiments>
</comment>
<comment type="interaction">
    <interactant intactId="EBI-9977294">
        <id>Q9UEG4</id>
    </interactant>
    <interactant intactId="EBI-17181882">
        <id>O75564-2</id>
        <label>JRK</label>
    </interactant>
    <organismsDiffer>false</organismsDiffer>
    <experiments>3</experiments>
</comment>
<comment type="interaction">
    <interactant intactId="EBI-9977294">
        <id>Q9UEG4</id>
    </interactant>
    <interactant intactId="EBI-740738">
        <id>O95751</id>
        <label>LDOC1</label>
    </interactant>
    <organismsDiffer>false</organismsDiffer>
    <experiments>3</experiments>
</comment>
<comment type="interaction">
    <interactant intactId="EBI-9977294">
        <id>Q9UEG4</id>
    </interactant>
    <interactant intactId="EBI-356283">
        <id>P36873</id>
        <label>PPP1CC</label>
    </interactant>
    <organismsDiffer>false</organismsDiffer>
    <experiments>3</experiments>
</comment>
<comment type="interaction">
    <interactant intactId="EBI-9977294">
        <id>Q9UEG4</id>
    </interactant>
    <interactant intactId="EBI-748350">
        <id>Q9UHP6</id>
        <label>RSPH14</label>
    </interactant>
    <organismsDiffer>false</organismsDiffer>
    <experiments>3</experiments>
</comment>
<comment type="interaction">
    <interactant intactId="EBI-9977294">
        <id>Q9UEG4</id>
    </interactant>
    <interactant intactId="EBI-358489">
        <id>Q96GM5</id>
        <label>SMARCD1</label>
    </interactant>
    <organismsDiffer>false</organismsDiffer>
    <experiments>3</experiments>
</comment>
<comment type="interaction">
    <interactant intactId="EBI-9977294">
        <id>Q9UEG4</id>
    </interactant>
    <interactant intactId="EBI-742688">
        <id>Q9NZD8</id>
        <label>SPG21</label>
    </interactant>
    <organismsDiffer>false</organismsDiffer>
    <experiments>3</experiments>
</comment>
<comment type="interaction">
    <interactant intactId="EBI-9977294">
        <id>Q9UEG4</id>
    </interactant>
    <interactant intactId="EBI-11139477">
        <id>Q96N21</id>
        <label>TEPSIN</label>
    </interactant>
    <organismsDiffer>false</organismsDiffer>
    <experiments>3</experiments>
</comment>
<comment type="interaction">
    <interactant intactId="EBI-9977294">
        <id>Q9UEG4</id>
    </interactant>
    <interactant intactId="EBI-725997">
        <id>Q8WV44</id>
        <label>TRIM41</label>
    </interactant>
    <organismsDiffer>false</organismsDiffer>
    <experiments>3</experiments>
</comment>
<comment type="interaction">
    <interactant intactId="EBI-9977294">
        <id>Q9UEG4</id>
    </interactant>
    <interactant intactId="EBI-716093">
        <id>P13994</id>
        <label>YJU2B</label>
    </interactant>
    <organismsDiffer>false</organismsDiffer>
    <experiments>3</experiments>
</comment>
<comment type="interaction">
    <interactant intactId="EBI-9977294">
        <id>Q9UEG4</id>
    </interactant>
    <interactant intactId="EBI-11962468">
        <id>Q7Z4V0</id>
        <label>ZNF438</label>
    </interactant>
    <organismsDiffer>false</organismsDiffer>
    <experiments>3</experiments>
</comment>
<comment type="interaction">
    <interactant intactId="EBI-9977294">
        <id>Q9UEG4</id>
    </interactant>
    <interactant intactId="EBI-5667516">
        <id>Q9Y2P0</id>
        <label>ZNF835</label>
    </interactant>
    <organismsDiffer>false</organismsDiffer>
    <experiments>3</experiments>
</comment>
<comment type="interaction">
    <interactant intactId="EBI-9977294">
        <id>Q9UEG4</id>
    </interactant>
    <interactant intactId="EBI-527853">
        <id>Q9UGI0</id>
        <label>ZRANB1</label>
    </interactant>
    <organismsDiffer>false</organismsDiffer>
    <experiments>3</experiments>
</comment>
<comment type="subcellular location">
    <subcellularLocation>
        <location evidence="3">Nucleus</location>
    </subcellularLocation>
</comment>
<comment type="similarity">
    <text evidence="3">Belongs to the krueppel C2H2-type zinc-finger protein family.</text>
</comment>
<comment type="sequence caution" evidence="3">
    <conflict type="erroneous initiation">
        <sequence resource="EMBL-CDS" id="BAA20784"/>
    </conflict>
</comment>
<keyword id="KW-0238">DNA-binding</keyword>
<keyword id="KW-1017">Isopeptide bond</keyword>
<keyword id="KW-0479">Metal-binding</keyword>
<keyword id="KW-0539">Nucleus</keyword>
<keyword id="KW-0597">Phosphoprotein</keyword>
<keyword id="KW-1267">Proteomics identification</keyword>
<keyword id="KW-1185">Reference proteome</keyword>
<keyword id="KW-0677">Repeat</keyword>
<keyword id="KW-0804">Transcription</keyword>
<keyword id="KW-0805">Transcription regulation</keyword>
<keyword id="KW-0832">Ubl conjugation</keyword>
<keyword id="KW-0862">Zinc</keyword>
<keyword id="KW-0863">Zinc-finger</keyword>
<gene>
    <name type="primary">ZNF629</name>
    <name type="synonym">KIAA0326</name>
    <name type="synonym">ZNF65</name>
</gene>
<protein>
    <recommendedName>
        <fullName>Zinc finger protein 629</fullName>
    </recommendedName>
    <alternativeName>
        <fullName>Zinc finger protein 65</fullName>
    </alternativeName>
</protein>
<evidence type="ECO:0000255" key="1">
    <source>
        <dbReference type="PROSITE-ProRule" id="PRU00042"/>
    </source>
</evidence>
<evidence type="ECO:0000256" key="2">
    <source>
        <dbReference type="SAM" id="MobiDB-lite"/>
    </source>
</evidence>
<evidence type="ECO:0000305" key="3"/>
<evidence type="ECO:0007744" key="4">
    <source>
    </source>
</evidence>
<evidence type="ECO:0007744" key="5">
    <source>
    </source>
</evidence>
<evidence type="ECO:0007744" key="6">
    <source>
    </source>
</evidence>
<evidence type="ECO:0007744" key="7">
    <source>
    </source>
</evidence>
<evidence type="ECO:0007744" key="8">
    <source>
    </source>
</evidence>
<dbReference type="EMBL" id="AB002324">
    <property type="protein sequence ID" value="BAA20784.1"/>
    <property type="status" value="ALT_INIT"/>
    <property type="molecule type" value="mRNA"/>
</dbReference>
<dbReference type="EMBL" id="M88374">
    <property type="protein sequence ID" value="AAA61332.1"/>
    <property type="molecule type" value="Genomic_DNA"/>
</dbReference>
<dbReference type="CCDS" id="CCDS45463.1"/>
<dbReference type="PIR" id="H45193">
    <property type="entry name" value="H45193"/>
</dbReference>
<dbReference type="RefSeq" id="NP_001073886.1">
    <property type="nucleotide sequence ID" value="NM_001080417.3"/>
</dbReference>
<dbReference type="RefSeq" id="NP_001332899.1">
    <property type="nucleotide sequence ID" value="NM_001345970.1"/>
</dbReference>
<dbReference type="SMR" id="Q9UEG4"/>
<dbReference type="BioGRID" id="116942">
    <property type="interactions" value="142"/>
</dbReference>
<dbReference type="FunCoup" id="Q9UEG4">
    <property type="interactions" value="374"/>
</dbReference>
<dbReference type="IntAct" id="Q9UEG4">
    <property type="interactions" value="85"/>
</dbReference>
<dbReference type="MINT" id="Q9UEG4"/>
<dbReference type="STRING" id="9606.ENSP00000262525"/>
<dbReference type="GlyGen" id="Q9UEG4">
    <property type="glycosylation" value="3 sites"/>
</dbReference>
<dbReference type="iPTMnet" id="Q9UEG4"/>
<dbReference type="PhosphoSitePlus" id="Q9UEG4"/>
<dbReference type="BioMuta" id="ZNF629"/>
<dbReference type="DMDM" id="134035371"/>
<dbReference type="jPOST" id="Q9UEG4"/>
<dbReference type="MassIVE" id="Q9UEG4"/>
<dbReference type="PaxDb" id="9606-ENSP00000262525"/>
<dbReference type="PeptideAtlas" id="Q9UEG4"/>
<dbReference type="ProteomicsDB" id="84146"/>
<dbReference type="Pumba" id="Q9UEG4"/>
<dbReference type="Antibodypedia" id="7095">
    <property type="antibodies" value="12 antibodies from 7 providers"/>
</dbReference>
<dbReference type="DNASU" id="23361"/>
<dbReference type="Ensembl" id="ENST00000262525.6">
    <property type="protein sequence ID" value="ENSP00000262525.4"/>
    <property type="gene ID" value="ENSG00000102870.6"/>
</dbReference>
<dbReference type="GeneID" id="23361"/>
<dbReference type="KEGG" id="hsa:23361"/>
<dbReference type="MANE-Select" id="ENST00000262525.6">
    <property type="protein sequence ID" value="ENSP00000262525.4"/>
    <property type="RefSeq nucleotide sequence ID" value="NM_001080417.3"/>
    <property type="RefSeq protein sequence ID" value="NP_001073886.1"/>
</dbReference>
<dbReference type="UCSC" id="uc002dzs.1">
    <property type="organism name" value="human"/>
</dbReference>
<dbReference type="AGR" id="HGNC:29008"/>
<dbReference type="CTD" id="23361"/>
<dbReference type="DisGeNET" id="23361"/>
<dbReference type="GeneCards" id="ZNF629"/>
<dbReference type="HGNC" id="HGNC:29008">
    <property type="gene designation" value="ZNF629"/>
</dbReference>
<dbReference type="HPA" id="ENSG00000102870">
    <property type="expression patterns" value="Low tissue specificity"/>
</dbReference>
<dbReference type="MIM" id="619587">
    <property type="type" value="gene"/>
</dbReference>
<dbReference type="neXtProt" id="NX_Q9UEG4"/>
<dbReference type="OpenTargets" id="ENSG00000102870"/>
<dbReference type="PharmGKB" id="PA134930939"/>
<dbReference type="VEuPathDB" id="HostDB:ENSG00000102870"/>
<dbReference type="eggNOG" id="KOG1721">
    <property type="taxonomic scope" value="Eukaryota"/>
</dbReference>
<dbReference type="GeneTree" id="ENSGT00940000161909"/>
<dbReference type="HOGENOM" id="CLU_002678_17_1_1"/>
<dbReference type="InParanoid" id="Q9UEG4"/>
<dbReference type="OMA" id="CGDSFTE"/>
<dbReference type="OrthoDB" id="654211at2759"/>
<dbReference type="PAN-GO" id="Q9UEG4">
    <property type="GO annotations" value="4 GO annotations based on evolutionary models"/>
</dbReference>
<dbReference type="PhylomeDB" id="Q9UEG4"/>
<dbReference type="TreeFam" id="TF350847"/>
<dbReference type="PathwayCommons" id="Q9UEG4"/>
<dbReference type="SignaLink" id="Q9UEG4"/>
<dbReference type="BioGRID-ORCS" id="23361">
    <property type="hits" value="54 hits in 1178 CRISPR screens"/>
</dbReference>
<dbReference type="ChiTaRS" id="ZNF629">
    <property type="organism name" value="human"/>
</dbReference>
<dbReference type="GenomeRNAi" id="23361"/>
<dbReference type="Pharos" id="Q9UEG4">
    <property type="development level" value="Tdark"/>
</dbReference>
<dbReference type="PRO" id="PR:Q9UEG4"/>
<dbReference type="Proteomes" id="UP000005640">
    <property type="component" value="Chromosome 16"/>
</dbReference>
<dbReference type="RNAct" id="Q9UEG4">
    <property type="molecule type" value="protein"/>
</dbReference>
<dbReference type="Bgee" id="ENSG00000102870">
    <property type="expression patterns" value="Expressed in tendon of biceps brachii and 196 other cell types or tissues"/>
</dbReference>
<dbReference type="GO" id="GO:0005634">
    <property type="term" value="C:nucleus"/>
    <property type="evidence" value="ECO:0000318"/>
    <property type="project" value="GO_Central"/>
</dbReference>
<dbReference type="GO" id="GO:0003677">
    <property type="term" value="F:DNA binding"/>
    <property type="evidence" value="ECO:0007669"/>
    <property type="project" value="UniProtKB-KW"/>
</dbReference>
<dbReference type="GO" id="GO:0008270">
    <property type="term" value="F:zinc ion binding"/>
    <property type="evidence" value="ECO:0007669"/>
    <property type="project" value="UniProtKB-KW"/>
</dbReference>
<dbReference type="GO" id="GO:0006357">
    <property type="term" value="P:regulation of transcription by RNA polymerase II"/>
    <property type="evidence" value="ECO:0000318"/>
    <property type="project" value="GO_Central"/>
</dbReference>
<dbReference type="FunFam" id="3.30.160.60:FF:002063">
    <property type="entry name" value="RB associated KRAB zinc finger"/>
    <property type="match status" value="1"/>
</dbReference>
<dbReference type="FunFam" id="3.30.160.60:FF:000269">
    <property type="entry name" value="Zinc finger protein 287"/>
    <property type="match status" value="1"/>
</dbReference>
<dbReference type="FunFam" id="3.30.160.60:FF:002254">
    <property type="entry name" value="Zinc finger protein 540"/>
    <property type="match status" value="1"/>
</dbReference>
<dbReference type="FunFam" id="3.30.160.60:FF:001767">
    <property type="entry name" value="Zinc finger protein 629"/>
    <property type="match status" value="2"/>
</dbReference>
<dbReference type="FunFam" id="3.30.160.60:FF:001960">
    <property type="entry name" value="zinc finger protein 629 isoform X1"/>
    <property type="match status" value="1"/>
</dbReference>
<dbReference type="FunFam" id="3.30.160.60:FF:000431">
    <property type="entry name" value="zinc finger protein 629 isoform X2"/>
    <property type="match status" value="3"/>
</dbReference>
<dbReference type="FunFam" id="3.30.160.60:FF:000520">
    <property type="entry name" value="zinc finger protein 629 isoform X2"/>
    <property type="match status" value="1"/>
</dbReference>
<dbReference type="FunFam" id="3.30.160.60:FF:000751">
    <property type="entry name" value="zinc finger protein 629 isoform X2"/>
    <property type="match status" value="2"/>
</dbReference>
<dbReference type="FunFam" id="3.30.160.60:FF:000990">
    <property type="entry name" value="zinc finger protein 629 isoform X2"/>
    <property type="match status" value="1"/>
</dbReference>
<dbReference type="FunFam" id="3.30.160.60:FF:001090">
    <property type="entry name" value="zinc finger protein 629 isoform X2"/>
    <property type="match status" value="1"/>
</dbReference>
<dbReference type="FunFam" id="3.30.160.60:FF:001188">
    <property type="entry name" value="zinc finger protein 629 isoform X2"/>
    <property type="match status" value="1"/>
</dbReference>
<dbReference type="FunFam" id="3.30.160.60:FF:001198">
    <property type="entry name" value="zinc finger protein 629 isoform X2"/>
    <property type="match status" value="1"/>
</dbReference>
<dbReference type="FunFam" id="3.30.160.60:FF:001202">
    <property type="entry name" value="zinc finger protein 629 isoform X2"/>
    <property type="match status" value="1"/>
</dbReference>
<dbReference type="Gene3D" id="3.30.160.60">
    <property type="entry name" value="Classic Zinc Finger"/>
    <property type="match status" value="18"/>
</dbReference>
<dbReference type="InterPro" id="IPR050758">
    <property type="entry name" value="Znf_C2H2-type"/>
</dbReference>
<dbReference type="InterPro" id="IPR036236">
    <property type="entry name" value="Znf_C2H2_sf"/>
</dbReference>
<dbReference type="InterPro" id="IPR013087">
    <property type="entry name" value="Znf_C2H2_type"/>
</dbReference>
<dbReference type="PANTHER" id="PTHR23234:SF10">
    <property type="entry name" value="RIKEN CDNA 6720489N17 GENE-RELATED"/>
    <property type="match status" value="1"/>
</dbReference>
<dbReference type="PANTHER" id="PTHR23234">
    <property type="entry name" value="ZNF44 PROTEIN"/>
    <property type="match status" value="1"/>
</dbReference>
<dbReference type="Pfam" id="PF00096">
    <property type="entry name" value="zf-C2H2"/>
    <property type="match status" value="14"/>
</dbReference>
<dbReference type="SMART" id="SM00355">
    <property type="entry name" value="ZnF_C2H2"/>
    <property type="match status" value="19"/>
</dbReference>
<dbReference type="SUPFAM" id="SSF57667">
    <property type="entry name" value="beta-beta-alpha zinc fingers"/>
    <property type="match status" value="13"/>
</dbReference>
<dbReference type="PROSITE" id="PS00028">
    <property type="entry name" value="ZINC_FINGER_C2H2_1"/>
    <property type="match status" value="19"/>
</dbReference>
<dbReference type="PROSITE" id="PS50157">
    <property type="entry name" value="ZINC_FINGER_C2H2_2"/>
    <property type="match status" value="19"/>
</dbReference>